<reference key="1">
    <citation type="submission" date="2007-02" db="EMBL/GenBank/DDBJ databases">
        <authorList>
            <consortium name="NIH - Mammalian Gene Collection (MGC) project"/>
        </authorList>
    </citation>
    <scope>NUCLEOTIDE SEQUENCE [LARGE SCALE MRNA]</scope>
    <source>
        <strain>Hereford</strain>
        <tissue>Fetal cerebellum</tissue>
    </source>
</reference>
<evidence type="ECO:0000250" key="1">
    <source>
        <dbReference type="UniProtKB" id="Q8WWC4"/>
    </source>
</evidence>
<evidence type="ECO:0000255" key="2"/>
<organism>
    <name type="scientific">Bos taurus</name>
    <name type="common">Bovine</name>
    <dbReference type="NCBI Taxonomy" id="9913"/>
    <lineage>
        <taxon>Eukaryota</taxon>
        <taxon>Metazoa</taxon>
        <taxon>Chordata</taxon>
        <taxon>Craniata</taxon>
        <taxon>Vertebrata</taxon>
        <taxon>Euteleostomi</taxon>
        <taxon>Mammalia</taxon>
        <taxon>Eutheria</taxon>
        <taxon>Laurasiatheria</taxon>
        <taxon>Artiodactyla</taxon>
        <taxon>Ruminantia</taxon>
        <taxon>Pecora</taxon>
        <taxon>Bovidae</taxon>
        <taxon>Bovinae</taxon>
        <taxon>Bos</taxon>
    </lineage>
</organism>
<dbReference type="EMBL" id="BC133463">
    <property type="protein sequence ID" value="AAI33464.1"/>
    <property type="molecule type" value="mRNA"/>
</dbReference>
<dbReference type="RefSeq" id="NP_001076875.1">
    <property type="nucleotide sequence ID" value="NM_001083406.2"/>
</dbReference>
<dbReference type="FunCoup" id="A3KN05">
    <property type="interactions" value="1145"/>
</dbReference>
<dbReference type="STRING" id="9913.ENSBTAP00000025606"/>
<dbReference type="PaxDb" id="9913-ENSBTAP00000025606"/>
<dbReference type="Ensembl" id="ENSBTAT00000025606.5">
    <property type="protein sequence ID" value="ENSBTAP00000025606.4"/>
    <property type="gene ID" value="ENSBTAG00000019231.6"/>
</dbReference>
<dbReference type="GeneID" id="510566"/>
<dbReference type="KEGG" id="bta:510566"/>
<dbReference type="CTD" id="79568"/>
<dbReference type="VEuPathDB" id="HostDB:ENSBTAG00000019231"/>
<dbReference type="VGNC" id="VGNC:31150">
    <property type="gene designation" value="MAIP1"/>
</dbReference>
<dbReference type="eggNOG" id="ENOG502QR8E">
    <property type="taxonomic scope" value="Eukaryota"/>
</dbReference>
<dbReference type="GeneTree" id="ENSGT00390000004145"/>
<dbReference type="HOGENOM" id="CLU_083348_0_0_1"/>
<dbReference type="InParanoid" id="A3KN05"/>
<dbReference type="OMA" id="SILMCFW"/>
<dbReference type="OrthoDB" id="7249367at2759"/>
<dbReference type="TreeFam" id="TF323801"/>
<dbReference type="Reactome" id="R-BTA-8949664">
    <property type="pathway name" value="Processing of SMDT1"/>
</dbReference>
<dbReference type="Proteomes" id="UP000009136">
    <property type="component" value="Chromosome 2"/>
</dbReference>
<dbReference type="Bgee" id="ENSBTAG00000019231">
    <property type="expression patterns" value="Expressed in oocyte and 104 other cell types or tissues"/>
</dbReference>
<dbReference type="GO" id="GO:0005743">
    <property type="term" value="C:mitochondrial inner membrane"/>
    <property type="evidence" value="ECO:0000318"/>
    <property type="project" value="GO_Central"/>
</dbReference>
<dbReference type="GO" id="GO:0005759">
    <property type="term" value="C:mitochondrial matrix"/>
    <property type="evidence" value="ECO:0000250"/>
    <property type="project" value="UniProtKB"/>
</dbReference>
<dbReference type="GO" id="GO:0043022">
    <property type="term" value="F:ribosome binding"/>
    <property type="evidence" value="ECO:0000318"/>
    <property type="project" value="GO_Central"/>
</dbReference>
<dbReference type="GO" id="GO:0036444">
    <property type="term" value="P:calcium import into the mitochondrion"/>
    <property type="evidence" value="ECO:0000250"/>
    <property type="project" value="UniProtKB"/>
</dbReference>
<dbReference type="GO" id="GO:0051560">
    <property type="term" value="P:mitochondrial calcium ion homeostasis"/>
    <property type="evidence" value="ECO:0000250"/>
    <property type="project" value="UniProtKB"/>
</dbReference>
<dbReference type="GO" id="GO:0032979">
    <property type="term" value="P:protein insertion into mitochondrial inner membrane from matrix"/>
    <property type="evidence" value="ECO:0000318"/>
    <property type="project" value="GO_Central"/>
</dbReference>
<dbReference type="GO" id="GO:0051204">
    <property type="term" value="P:protein insertion into mitochondrial membrane"/>
    <property type="evidence" value="ECO:0000250"/>
    <property type="project" value="UniProtKB"/>
</dbReference>
<dbReference type="PANTHER" id="PTHR13333">
    <property type="entry name" value="M-AAA PROTEASE-INTERACTING PROTEIN 1, MITOCHONDRIAL"/>
    <property type="match status" value="1"/>
</dbReference>
<dbReference type="PANTHER" id="PTHR13333:SF5">
    <property type="entry name" value="M-AAA PROTEASE-INTERACTING PROTEIN 1, MITOCHONDRIAL"/>
    <property type="match status" value="1"/>
</dbReference>
<name>MAIP1_BOVIN</name>
<accession>A3KN05</accession>
<proteinExistence type="evidence at transcript level"/>
<gene>
    <name evidence="1" type="primary">MAIP1</name>
</gene>
<feature type="transit peptide" description="Mitochondrion" evidence="2">
    <location>
        <begin position="1"/>
        <end position="96"/>
    </location>
</feature>
<feature type="chain" id="PRO_0000301944" description="m-AAA protease-interacting protein 1, mitochondrial">
    <location>
        <begin position="97"/>
        <end position="291"/>
    </location>
</feature>
<keyword id="KW-0496">Mitochondrion</keyword>
<keyword id="KW-1185">Reference proteome</keyword>
<keyword id="KW-0809">Transit peptide</keyword>
<comment type="function">
    <text evidence="1">Promotes sorting of SMDT1/EMRE in mitochondria by ensuring its maturation. Interacts with the transit peptide region of SMDT1/EMRE precursor protein in the mitochondrial matrix, leading to protect it against protein degradation by YME1L1, thereby ensuring SMDT1/EMRE maturation by the mitochondrial processing peptidase (PMPCA and PMPCB).</text>
</comment>
<comment type="subunit">
    <text evidence="1">Interacts with AFG3L2. Interacts with SPG7. Interacts with SMDT1/EMRE (via the N-terminal transit peptide); interaction is direct and takes place before maturation of SMDT1/EMRE.</text>
</comment>
<comment type="subcellular location">
    <subcellularLocation>
        <location evidence="1">Mitochondrion matrix</location>
    </subcellularLocation>
</comment>
<protein>
    <recommendedName>
        <fullName evidence="1">m-AAA protease-interacting protein 1, mitochondrial</fullName>
    </recommendedName>
    <alternativeName>
        <fullName evidence="1">Matrix AAA peptidase-interacting protein 1</fullName>
    </alternativeName>
</protein>
<sequence>MALAVRLLPRLLLSRPLPGWAARLRTLSSAEVKRPLSGLCYLCRRRLGSGAAPFPRVSWASAALALSARGPQRPLLSPLEVASTLPTFPSCPRRTYSTEEQPQQRQKTKMIILGFSNPINWVRTRIYSFLIWAYFDQEFSITEFSEGAKQAFAHVSKLLSQCKFDLLEELVAKETLHVLKEKVTSLPDNHKNALAADIDEIVYTSTGDISIYYDEKGRKFVNILMCFWYLTSANIPSEAISGARVFQVKLGDQNVETKQLLSASYEFQREFTQGVKPDWTIARIEHPKLLE</sequence>